<sequence length="469" mass="50337">MMKNRVTNIHFVGIGGVGMSGIAEVLHNLGFKVSGSDQARNAATEHLGSLGIQVYPGHTAEHVNGADVVVTSTAVKKENPEVVAALEQQIPVIPRALMLAELMRFRDGIAIAGTHGKTTTTSLTASILGAAGLDPTFVIGGKLNAAGTNARLGKGEYIVAEADESDASFLHLTPIMSVVTNIDEDHMDTYGHSVEKLHQAFIDFIHRMPFYGKAFLCIDSEHVRAILPKVSKPYATYGLDDTADIYATDIENVGAQMKFTVHVQMKGHEQGSFEVVLNMPGRHNVLNALAAIGVALEVGASVEAIQKGLLGFEGVGRRFQKYGDIKLPNGGTALLVDDYGHHPVEMAATLSAARGAYPEKRLVLAFQPHRYTRTRDLFEDFTKVLNTVDALVLTEVYAAGEEPIAAADSRALARAIRVLGKLEPIYCENVADLPEMLLNVLQDGDIVLNMGAGSINRVPAALLELSKQI</sequence>
<accession>Q9JSZ8</accession>
<accession>A1ITP7</accession>
<evidence type="ECO:0000255" key="1">
    <source>
        <dbReference type="HAMAP-Rule" id="MF_00046"/>
    </source>
</evidence>
<evidence type="ECO:0000305" key="2"/>
<keyword id="KW-0067">ATP-binding</keyword>
<keyword id="KW-0131">Cell cycle</keyword>
<keyword id="KW-0132">Cell division</keyword>
<keyword id="KW-0133">Cell shape</keyword>
<keyword id="KW-0961">Cell wall biogenesis/degradation</keyword>
<keyword id="KW-0963">Cytoplasm</keyword>
<keyword id="KW-0436">Ligase</keyword>
<keyword id="KW-0547">Nucleotide-binding</keyword>
<keyword id="KW-0573">Peptidoglycan synthesis</keyword>
<name>MURC_NEIMA</name>
<dbReference type="EC" id="6.3.2.8" evidence="1"/>
<dbReference type="EMBL" id="AL157959">
    <property type="protein sequence ID" value="CAM09164.1"/>
    <property type="status" value="ALT_INIT"/>
    <property type="molecule type" value="Genomic_DNA"/>
</dbReference>
<dbReference type="RefSeq" id="WP_002218797.1">
    <property type="nucleotide sequence ID" value="NC_003116.1"/>
</dbReference>
<dbReference type="SMR" id="Q9JSZ8"/>
<dbReference type="EnsemblBacteria" id="CAM09164">
    <property type="protein sequence ID" value="CAM09164"/>
    <property type="gene ID" value="NMA2061"/>
</dbReference>
<dbReference type="GeneID" id="93387520"/>
<dbReference type="KEGG" id="nma:NMA2061"/>
<dbReference type="HOGENOM" id="CLU_028104_2_2_4"/>
<dbReference type="UniPathway" id="UPA00219"/>
<dbReference type="Proteomes" id="UP000000626">
    <property type="component" value="Chromosome"/>
</dbReference>
<dbReference type="GO" id="GO:0005737">
    <property type="term" value="C:cytoplasm"/>
    <property type="evidence" value="ECO:0007669"/>
    <property type="project" value="UniProtKB-SubCell"/>
</dbReference>
<dbReference type="GO" id="GO:0005524">
    <property type="term" value="F:ATP binding"/>
    <property type="evidence" value="ECO:0007669"/>
    <property type="project" value="UniProtKB-UniRule"/>
</dbReference>
<dbReference type="GO" id="GO:0008763">
    <property type="term" value="F:UDP-N-acetylmuramate-L-alanine ligase activity"/>
    <property type="evidence" value="ECO:0007669"/>
    <property type="project" value="UniProtKB-UniRule"/>
</dbReference>
<dbReference type="GO" id="GO:0051301">
    <property type="term" value="P:cell division"/>
    <property type="evidence" value="ECO:0007669"/>
    <property type="project" value="UniProtKB-KW"/>
</dbReference>
<dbReference type="GO" id="GO:0071555">
    <property type="term" value="P:cell wall organization"/>
    <property type="evidence" value="ECO:0007669"/>
    <property type="project" value="UniProtKB-KW"/>
</dbReference>
<dbReference type="GO" id="GO:0009252">
    <property type="term" value="P:peptidoglycan biosynthetic process"/>
    <property type="evidence" value="ECO:0007669"/>
    <property type="project" value="UniProtKB-UniRule"/>
</dbReference>
<dbReference type="GO" id="GO:0008360">
    <property type="term" value="P:regulation of cell shape"/>
    <property type="evidence" value="ECO:0007669"/>
    <property type="project" value="UniProtKB-KW"/>
</dbReference>
<dbReference type="FunFam" id="3.40.1190.10:FF:000001">
    <property type="entry name" value="UDP-N-acetylmuramate--L-alanine ligase"/>
    <property type="match status" value="1"/>
</dbReference>
<dbReference type="Gene3D" id="3.90.190.20">
    <property type="entry name" value="Mur ligase, C-terminal domain"/>
    <property type="match status" value="1"/>
</dbReference>
<dbReference type="Gene3D" id="3.40.1190.10">
    <property type="entry name" value="Mur-like, catalytic domain"/>
    <property type="match status" value="1"/>
</dbReference>
<dbReference type="Gene3D" id="3.40.50.720">
    <property type="entry name" value="NAD(P)-binding Rossmann-like Domain"/>
    <property type="match status" value="1"/>
</dbReference>
<dbReference type="HAMAP" id="MF_00046">
    <property type="entry name" value="MurC"/>
    <property type="match status" value="1"/>
</dbReference>
<dbReference type="InterPro" id="IPR036565">
    <property type="entry name" value="Mur-like_cat_sf"/>
</dbReference>
<dbReference type="InterPro" id="IPR004101">
    <property type="entry name" value="Mur_ligase_C"/>
</dbReference>
<dbReference type="InterPro" id="IPR036615">
    <property type="entry name" value="Mur_ligase_C_dom_sf"/>
</dbReference>
<dbReference type="InterPro" id="IPR013221">
    <property type="entry name" value="Mur_ligase_cen"/>
</dbReference>
<dbReference type="InterPro" id="IPR000713">
    <property type="entry name" value="Mur_ligase_N"/>
</dbReference>
<dbReference type="InterPro" id="IPR050061">
    <property type="entry name" value="MurCDEF_pg_biosynth"/>
</dbReference>
<dbReference type="InterPro" id="IPR005758">
    <property type="entry name" value="UDP-N-AcMur_Ala_ligase_MurC"/>
</dbReference>
<dbReference type="NCBIfam" id="TIGR01082">
    <property type="entry name" value="murC"/>
    <property type="match status" value="1"/>
</dbReference>
<dbReference type="PANTHER" id="PTHR43445:SF3">
    <property type="entry name" value="UDP-N-ACETYLMURAMATE--L-ALANINE LIGASE"/>
    <property type="match status" value="1"/>
</dbReference>
<dbReference type="PANTHER" id="PTHR43445">
    <property type="entry name" value="UDP-N-ACETYLMURAMATE--L-ALANINE LIGASE-RELATED"/>
    <property type="match status" value="1"/>
</dbReference>
<dbReference type="Pfam" id="PF01225">
    <property type="entry name" value="Mur_ligase"/>
    <property type="match status" value="1"/>
</dbReference>
<dbReference type="Pfam" id="PF02875">
    <property type="entry name" value="Mur_ligase_C"/>
    <property type="match status" value="1"/>
</dbReference>
<dbReference type="Pfam" id="PF08245">
    <property type="entry name" value="Mur_ligase_M"/>
    <property type="match status" value="1"/>
</dbReference>
<dbReference type="SUPFAM" id="SSF51984">
    <property type="entry name" value="MurCD N-terminal domain"/>
    <property type="match status" value="1"/>
</dbReference>
<dbReference type="SUPFAM" id="SSF53623">
    <property type="entry name" value="MurD-like peptide ligases, catalytic domain"/>
    <property type="match status" value="1"/>
</dbReference>
<dbReference type="SUPFAM" id="SSF53244">
    <property type="entry name" value="MurD-like peptide ligases, peptide-binding domain"/>
    <property type="match status" value="1"/>
</dbReference>
<comment type="function">
    <text evidence="1">Cell wall formation.</text>
</comment>
<comment type="catalytic activity">
    <reaction evidence="1">
        <text>UDP-N-acetyl-alpha-D-muramate + L-alanine + ATP = UDP-N-acetyl-alpha-D-muramoyl-L-alanine + ADP + phosphate + H(+)</text>
        <dbReference type="Rhea" id="RHEA:23372"/>
        <dbReference type="ChEBI" id="CHEBI:15378"/>
        <dbReference type="ChEBI" id="CHEBI:30616"/>
        <dbReference type="ChEBI" id="CHEBI:43474"/>
        <dbReference type="ChEBI" id="CHEBI:57972"/>
        <dbReference type="ChEBI" id="CHEBI:70757"/>
        <dbReference type="ChEBI" id="CHEBI:83898"/>
        <dbReference type="ChEBI" id="CHEBI:456216"/>
        <dbReference type="EC" id="6.3.2.8"/>
    </reaction>
</comment>
<comment type="pathway">
    <text evidence="1">Cell wall biogenesis; peptidoglycan biosynthesis.</text>
</comment>
<comment type="subcellular location">
    <subcellularLocation>
        <location evidence="1">Cytoplasm</location>
    </subcellularLocation>
</comment>
<comment type="similarity">
    <text evidence="1">Belongs to the MurCDEF family.</text>
</comment>
<comment type="sequence caution" evidence="2">
    <conflict type="erroneous initiation">
        <sequence resource="EMBL-CDS" id="CAM09164"/>
    </conflict>
</comment>
<organism>
    <name type="scientific">Neisseria meningitidis serogroup A / serotype 4A (strain DSM 15465 / Z2491)</name>
    <dbReference type="NCBI Taxonomy" id="122587"/>
    <lineage>
        <taxon>Bacteria</taxon>
        <taxon>Pseudomonadati</taxon>
        <taxon>Pseudomonadota</taxon>
        <taxon>Betaproteobacteria</taxon>
        <taxon>Neisseriales</taxon>
        <taxon>Neisseriaceae</taxon>
        <taxon>Neisseria</taxon>
    </lineage>
</organism>
<feature type="chain" id="PRO_0000182121" description="UDP-N-acetylmuramate--L-alanine ligase">
    <location>
        <begin position="1"/>
        <end position="469"/>
    </location>
</feature>
<feature type="binding site" evidence="1">
    <location>
        <begin position="113"/>
        <end position="119"/>
    </location>
    <ligand>
        <name>ATP</name>
        <dbReference type="ChEBI" id="CHEBI:30616"/>
    </ligand>
</feature>
<proteinExistence type="inferred from homology"/>
<protein>
    <recommendedName>
        <fullName evidence="1">UDP-N-acetylmuramate--L-alanine ligase</fullName>
        <ecNumber evidence="1">6.3.2.8</ecNumber>
    </recommendedName>
    <alternativeName>
        <fullName evidence="1">UDP-N-acetylmuramoyl-L-alanine synthetase</fullName>
    </alternativeName>
</protein>
<gene>
    <name evidence="1" type="primary">murC</name>
    <name type="ordered locus">NMA2061</name>
</gene>
<reference key="1">
    <citation type="journal article" date="2000" name="Nature">
        <title>Complete DNA sequence of a serogroup A strain of Neisseria meningitidis Z2491.</title>
        <authorList>
            <person name="Parkhill J."/>
            <person name="Achtman M."/>
            <person name="James K.D."/>
            <person name="Bentley S.D."/>
            <person name="Churcher C.M."/>
            <person name="Klee S.R."/>
            <person name="Morelli G."/>
            <person name="Basham D."/>
            <person name="Brown D."/>
            <person name="Chillingworth T."/>
            <person name="Davies R.M."/>
            <person name="Davis P."/>
            <person name="Devlin K."/>
            <person name="Feltwell T."/>
            <person name="Hamlin N."/>
            <person name="Holroyd S."/>
            <person name="Jagels K."/>
            <person name="Leather S."/>
            <person name="Moule S."/>
            <person name="Mungall K.L."/>
            <person name="Quail M.A."/>
            <person name="Rajandream M.A."/>
            <person name="Rutherford K.M."/>
            <person name="Simmonds M."/>
            <person name="Skelton J."/>
            <person name="Whitehead S."/>
            <person name="Spratt B.G."/>
            <person name="Barrell B.G."/>
        </authorList>
    </citation>
    <scope>NUCLEOTIDE SEQUENCE [LARGE SCALE GENOMIC DNA]</scope>
    <source>
        <strain>DSM 15465 / Z2491</strain>
    </source>
</reference>